<keyword id="KW-1185">Reference proteome</keyword>
<keyword id="KW-0687">Ribonucleoprotein</keyword>
<keyword id="KW-0689">Ribosomal protein</keyword>
<reference key="1">
    <citation type="journal article" date="1997" name="Nature">
        <title>The complete genome sequence of the hyperthermophilic, sulphate-reducing archaeon Archaeoglobus fulgidus.</title>
        <authorList>
            <person name="Klenk H.-P."/>
            <person name="Clayton R.A."/>
            <person name="Tomb J.-F."/>
            <person name="White O."/>
            <person name="Nelson K.E."/>
            <person name="Ketchum K.A."/>
            <person name="Dodson R.J."/>
            <person name="Gwinn M.L."/>
            <person name="Hickey E.K."/>
            <person name="Peterson J.D."/>
            <person name="Richardson D.L."/>
            <person name="Kerlavage A.R."/>
            <person name="Graham D.E."/>
            <person name="Kyrpides N.C."/>
            <person name="Fleischmann R.D."/>
            <person name="Quackenbush J."/>
            <person name="Lee N.H."/>
            <person name="Sutton G.G."/>
            <person name="Gill S.R."/>
            <person name="Kirkness E.F."/>
            <person name="Dougherty B.A."/>
            <person name="McKenney K."/>
            <person name="Adams M.D."/>
            <person name="Loftus B.J."/>
            <person name="Peterson S.N."/>
            <person name="Reich C.I."/>
            <person name="McNeil L.K."/>
            <person name="Badger J.H."/>
            <person name="Glodek A."/>
            <person name="Zhou L."/>
            <person name="Overbeek R."/>
            <person name="Gocayne J.D."/>
            <person name="Weidman J.F."/>
            <person name="McDonald L.A."/>
            <person name="Utterback T.R."/>
            <person name="Cotton M.D."/>
            <person name="Spriggs T."/>
            <person name="Artiach P."/>
            <person name="Kaine B.P."/>
            <person name="Sykes S.M."/>
            <person name="Sadow P.W."/>
            <person name="D'Andrea K.P."/>
            <person name="Bowman C."/>
            <person name="Fujii C."/>
            <person name="Garland S.A."/>
            <person name="Mason T.M."/>
            <person name="Olsen G.J."/>
            <person name="Fraser C.M."/>
            <person name="Smith H.O."/>
            <person name="Woese C.R."/>
            <person name="Venter J.C."/>
        </authorList>
    </citation>
    <scope>NUCLEOTIDE SEQUENCE [LARGE SCALE GENOMIC DNA]</scope>
    <source>
        <strain>ATCC 49558 / DSM 4304 / JCM 9628 / NBRC 100126 / VC-16</strain>
    </source>
</reference>
<proteinExistence type="inferred from homology"/>
<sequence>MSEMKIVVTSGKRKTATARAVIKPGKGRVRINSVPVEIHQPELARMKIMEPLIIAKELAEKVDIEVKTWGGGFMAQAEAARTAIARALLEFSGDEELRKAFLEYDRTLLVNDVRRKLPKIQGGRGARARRQTSYR</sequence>
<accession>O29136</accession>
<evidence type="ECO:0000305" key="1"/>
<gene>
    <name type="primary">rps9</name>
    <name type="ordered locus">AF_1129</name>
</gene>
<feature type="chain" id="PRO_0000111461" description="Small ribosomal subunit protein uS9">
    <location>
        <begin position="1"/>
        <end position="135"/>
    </location>
</feature>
<organism>
    <name type="scientific">Archaeoglobus fulgidus (strain ATCC 49558 / DSM 4304 / JCM 9628 / NBRC 100126 / VC-16)</name>
    <dbReference type="NCBI Taxonomy" id="224325"/>
    <lineage>
        <taxon>Archaea</taxon>
        <taxon>Methanobacteriati</taxon>
        <taxon>Methanobacteriota</taxon>
        <taxon>Archaeoglobi</taxon>
        <taxon>Archaeoglobales</taxon>
        <taxon>Archaeoglobaceae</taxon>
        <taxon>Archaeoglobus</taxon>
    </lineage>
</organism>
<name>RS9_ARCFU</name>
<dbReference type="EMBL" id="AE000782">
    <property type="protein sequence ID" value="AAB90113.1"/>
    <property type="molecule type" value="Genomic_DNA"/>
</dbReference>
<dbReference type="PIR" id="H69390">
    <property type="entry name" value="H69390"/>
</dbReference>
<dbReference type="SMR" id="O29136"/>
<dbReference type="STRING" id="224325.AF_1129"/>
<dbReference type="PaxDb" id="224325-AF_1129"/>
<dbReference type="EnsemblBacteria" id="AAB90113">
    <property type="protein sequence ID" value="AAB90113"/>
    <property type="gene ID" value="AF_1129"/>
</dbReference>
<dbReference type="KEGG" id="afu:AF_1129"/>
<dbReference type="eggNOG" id="arCOG04243">
    <property type="taxonomic scope" value="Archaea"/>
</dbReference>
<dbReference type="HOGENOM" id="CLU_046483_4_0_2"/>
<dbReference type="PhylomeDB" id="O29136"/>
<dbReference type="Proteomes" id="UP000002199">
    <property type="component" value="Chromosome"/>
</dbReference>
<dbReference type="GO" id="GO:0022627">
    <property type="term" value="C:cytosolic small ribosomal subunit"/>
    <property type="evidence" value="ECO:0007669"/>
    <property type="project" value="TreeGrafter"/>
</dbReference>
<dbReference type="GO" id="GO:0003723">
    <property type="term" value="F:RNA binding"/>
    <property type="evidence" value="ECO:0007669"/>
    <property type="project" value="TreeGrafter"/>
</dbReference>
<dbReference type="GO" id="GO:0003735">
    <property type="term" value="F:structural constituent of ribosome"/>
    <property type="evidence" value="ECO:0007669"/>
    <property type="project" value="InterPro"/>
</dbReference>
<dbReference type="GO" id="GO:0000462">
    <property type="term" value="P:maturation of SSU-rRNA from tricistronic rRNA transcript (SSU-rRNA, 5.8S rRNA, LSU-rRNA)"/>
    <property type="evidence" value="ECO:0007669"/>
    <property type="project" value="TreeGrafter"/>
</dbReference>
<dbReference type="GO" id="GO:0006412">
    <property type="term" value="P:translation"/>
    <property type="evidence" value="ECO:0007669"/>
    <property type="project" value="UniProtKB-UniRule"/>
</dbReference>
<dbReference type="Gene3D" id="3.30.230.10">
    <property type="match status" value="1"/>
</dbReference>
<dbReference type="HAMAP" id="MF_00532_A">
    <property type="entry name" value="Ribosomal_uS9_A"/>
    <property type="match status" value="1"/>
</dbReference>
<dbReference type="InterPro" id="IPR020568">
    <property type="entry name" value="Ribosomal_Su5_D2-typ_SF"/>
</dbReference>
<dbReference type="InterPro" id="IPR000754">
    <property type="entry name" value="Ribosomal_uS9"/>
</dbReference>
<dbReference type="InterPro" id="IPR019958">
    <property type="entry name" value="Ribosomal_uS9_archaeal"/>
</dbReference>
<dbReference type="InterPro" id="IPR020574">
    <property type="entry name" value="Ribosomal_uS9_CS"/>
</dbReference>
<dbReference type="InterPro" id="IPR014721">
    <property type="entry name" value="Ribsml_uS5_D2-typ_fold_subgr"/>
</dbReference>
<dbReference type="NCBIfam" id="NF001749">
    <property type="entry name" value="PRK00474.1"/>
    <property type="match status" value="1"/>
</dbReference>
<dbReference type="NCBIfam" id="TIGR03627">
    <property type="entry name" value="uS9_arch"/>
    <property type="match status" value="1"/>
</dbReference>
<dbReference type="PANTHER" id="PTHR21569:SF16">
    <property type="entry name" value="RIBOSOMAL PROTEIN S16"/>
    <property type="match status" value="1"/>
</dbReference>
<dbReference type="PANTHER" id="PTHR21569">
    <property type="entry name" value="RIBOSOMAL PROTEIN S9"/>
    <property type="match status" value="1"/>
</dbReference>
<dbReference type="Pfam" id="PF00380">
    <property type="entry name" value="Ribosomal_S9"/>
    <property type="match status" value="1"/>
</dbReference>
<dbReference type="SUPFAM" id="SSF54211">
    <property type="entry name" value="Ribosomal protein S5 domain 2-like"/>
    <property type="match status" value="1"/>
</dbReference>
<dbReference type="PROSITE" id="PS00360">
    <property type="entry name" value="RIBOSOMAL_S9"/>
    <property type="match status" value="1"/>
</dbReference>
<protein>
    <recommendedName>
        <fullName evidence="1">Small ribosomal subunit protein uS9</fullName>
    </recommendedName>
    <alternativeName>
        <fullName>30S ribosomal protein S9</fullName>
    </alternativeName>
</protein>
<comment type="similarity">
    <text evidence="1">Belongs to the universal ribosomal protein uS9 family.</text>
</comment>